<name>SYN_STRSV</name>
<feature type="chain" id="PRO_1000051449" description="Asparagine--tRNA ligase">
    <location>
        <begin position="1"/>
        <end position="448"/>
    </location>
</feature>
<organism>
    <name type="scientific">Streptococcus sanguinis (strain SK36)</name>
    <dbReference type="NCBI Taxonomy" id="388919"/>
    <lineage>
        <taxon>Bacteria</taxon>
        <taxon>Bacillati</taxon>
        <taxon>Bacillota</taxon>
        <taxon>Bacilli</taxon>
        <taxon>Lactobacillales</taxon>
        <taxon>Streptococcaceae</taxon>
        <taxon>Streptococcus</taxon>
    </lineage>
</organism>
<reference key="1">
    <citation type="journal article" date="2007" name="J. Bacteriol.">
        <title>Genome of the opportunistic pathogen Streptococcus sanguinis.</title>
        <authorList>
            <person name="Xu P."/>
            <person name="Alves J.M."/>
            <person name="Kitten T."/>
            <person name="Brown A."/>
            <person name="Chen Z."/>
            <person name="Ozaki L.S."/>
            <person name="Manque P."/>
            <person name="Ge X."/>
            <person name="Serrano M.G."/>
            <person name="Puiu D."/>
            <person name="Hendricks S."/>
            <person name="Wang Y."/>
            <person name="Chaplin M.D."/>
            <person name="Akan D."/>
            <person name="Paik S."/>
            <person name="Peterson D.L."/>
            <person name="Macrina F.L."/>
            <person name="Buck G.A."/>
        </authorList>
    </citation>
    <scope>NUCLEOTIDE SEQUENCE [LARGE SCALE GENOMIC DNA]</scope>
    <source>
        <strain>SK36</strain>
    </source>
</reference>
<sequence>MSKKIVTIIDVKNYVGQEVTIGAWVANKSGKGKIAFLQLRDGSAFFQGVAFKPNFIEKFGEEEGLAKFDTIKKLSQETSVYVTGVVKEDERSKFGYELDITDIEIIGESNDYPITPKEHGTDFLMDNRHLWLRSRKQVAMMQIRNAIIYATYEFFDKNGFMKFDSPILSGNAAEDSTELFETDYFGTPAYLSQSGQLYLEAGAMALGRVFDFGPVFRAEKSKTRRHLTEFWMMDAEYSYLTHDESLDLQEAYVKALIQGVLDRAPQALETLERDVELLKRYIAEPFKRVSYDEAIDLLQAHENDEDADYEHLEHGDDFGSPHETWISNHFGVPTFVVNYPAAIKAFYMKPVPGNPDRVLCADLLAPEGYGEIIGGSMREEDYDALVAKMNDLGMDTTEYEFYLDLRKYGTVPHGGFGIGIERMVTFVAGTKHIREAIPFPRMLHRIKP</sequence>
<evidence type="ECO:0000255" key="1">
    <source>
        <dbReference type="HAMAP-Rule" id="MF_00534"/>
    </source>
</evidence>
<dbReference type="EC" id="6.1.1.22" evidence="1"/>
<dbReference type="EMBL" id="CP000387">
    <property type="protein sequence ID" value="ABN44775.1"/>
    <property type="molecule type" value="Genomic_DNA"/>
</dbReference>
<dbReference type="RefSeq" id="WP_009659378.1">
    <property type="nucleotide sequence ID" value="NC_009009.1"/>
</dbReference>
<dbReference type="RefSeq" id="YP_001035325.1">
    <property type="nucleotide sequence ID" value="NC_009009.1"/>
</dbReference>
<dbReference type="SMR" id="A3CNM0"/>
<dbReference type="STRING" id="388919.SSA_1377"/>
<dbReference type="KEGG" id="ssa:SSA_1377"/>
<dbReference type="PATRIC" id="fig|388919.9.peg.1309"/>
<dbReference type="eggNOG" id="COG0017">
    <property type="taxonomic scope" value="Bacteria"/>
</dbReference>
<dbReference type="HOGENOM" id="CLU_004553_2_0_9"/>
<dbReference type="OrthoDB" id="9762036at2"/>
<dbReference type="Proteomes" id="UP000002148">
    <property type="component" value="Chromosome"/>
</dbReference>
<dbReference type="GO" id="GO:0005737">
    <property type="term" value="C:cytoplasm"/>
    <property type="evidence" value="ECO:0007669"/>
    <property type="project" value="UniProtKB-SubCell"/>
</dbReference>
<dbReference type="GO" id="GO:0004816">
    <property type="term" value="F:asparagine-tRNA ligase activity"/>
    <property type="evidence" value="ECO:0007669"/>
    <property type="project" value="UniProtKB-UniRule"/>
</dbReference>
<dbReference type="GO" id="GO:0005524">
    <property type="term" value="F:ATP binding"/>
    <property type="evidence" value="ECO:0007669"/>
    <property type="project" value="UniProtKB-UniRule"/>
</dbReference>
<dbReference type="GO" id="GO:0140096">
    <property type="term" value="F:catalytic activity, acting on a protein"/>
    <property type="evidence" value="ECO:0007669"/>
    <property type="project" value="UniProtKB-ARBA"/>
</dbReference>
<dbReference type="GO" id="GO:0003676">
    <property type="term" value="F:nucleic acid binding"/>
    <property type="evidence" value="ECO:0007669"/>
    <property type="project" value="InterPro"/>
</dbReference>
<dbReference type="GO" id="GO:0016740">
    <property type="term" value="F:transferase activity"/>
    <property type="evidence" value="ECO:0007669"/>
    <property type="project" value="UniProtKB-ARBA"/>
</dbReference>
<dbReference type="GO" id="GO:0006421">
    <property type="term" value="P:asparaginyl-tRNA aminoacylation"/>
    <property type="evidence" value="ECO:0007669"/>
    <property type="project" value="UniProtKB-UniRule"/>
</dbReference>
<dbReference type="CDD" id="cd04323">
    <property type="entry name" value="AsnRS_cyto_like_N"/>
    <property type="match status" value="1"/>
</dbReference>
<dbReference type="CDD" id="cd00776">
    <property type="entry name" value="AsxRS_core"/>
    <property type="match status" value="1"/>
</dbReference>
<dbReference type="Gene3D" id="3.30.930.10">
    <property type="entry name" value="Bira Bifunctional Protein, Domain 2"/>
    <property type="match status" value="1"/>
</dbReference>
<dbReference type="Gene3D" id="2.40.50.140">
    <property type="entry name" value="Nucleic acid-binding proteins"/>
    <property type="match status" value="1"/>
</dbReference>
<dbReference type="HAMAP" id="MF_00534">
    <property type="entry name" value="Asn_tRNA_synth"/>
    <property type="match status" value="1"/>
</dbReference>
<dbReference type="InterPro" id="IPR004364">
    <property type="entry name" value="Aa-tRNA-synt_II"/>
</dbReference>
<dbReference type="InterPro" id="IPR006195">
    <property type="entry name" value="aa-tRNA-synth_II"/>
</dbReference>
<dbReference type="InterPro" id="IPR045864">
    <property type="entry name" value="aa-tRNA-synth_II/BPL/LPL"/>
</dbReference>
<dbReference type="InterPro" id="IPR004522">
    <property type="entry name" value="Asn-tRNA-ligase"/>
</dbReference>
<dbReference type="InterPro" id="IPR002312">
    <property type="entry name" value="Asp/Asn-tRNA-synth_IIb"/>
</dbReference>
<dbReference type="InterPro" id="IPR012340">
    <property type="entry name" value="NA-bd_OB-fold"/>
</dbReference>
<dbReference type="InterPro" id="IPR004365">
    <property type="entry name" value="NA-bd_OB_tRNA"/>
</dbReference>
<dbReference type="NCBIfam" id="TIGR00457">
    <property type="entry name" value="asnS"/>
    <property type="match status" value="1"/>
</dbReference>
<dbReference type="NCBIfam" id="NF003037">
    <property type="entry name" value="PRK03932.1"/>
    <property type="match status" value="1"/>
</dbReference>
<dbReference type="PANTHER" id="PTHR22594:SF34">
    <property type="entry name" value="ASPARAGINE--TRNA LIGASE, MITOCHONDRIAL-RELATED"/>
    <property type="match status" value="1"/>
</dbReference>
<dbReference type="PANTHER" id="PTHR22594">
    <property type="entry name" value="ASPARTYL/LYSYL-TRNA SYNTHETASE"/>
    <property type="match status" value="1"/>
</dbReference>
<dbReference type="Pfam" id="PF00152">
    <property type="entry name" value="tRNA-synt_2"/>
    <property type="match status" value="1"/>
</dbReference>
<dbReference type="Pfam" id="PF01336">
    <property type="entry name" value="tRNA_anti-codon"/>
    <property type="match status" value="1"/>
</dbReference>
<dbReference type="PRINTS" id="PR01042">
    <property type="entry name" value="TRNASYNTHASP"/>
</dbReference>
<dbReference type="SUPFAM" id="SSF55681">
    <property type="entry name" value="Class II aaRS and biotin synthetases"/>
    <property type="match status" value="1"/>
</dbReference>
<dbReference type="SUPFAM" id="SSF50249">
    <property type="entry name" value="Nucleic acid-binding proteins"/>
    <property type="match status" value="1"/>
</dbReference>
<dbReference type="PROSITE" id="PS50862">
    <property type="entry name" value="AA_TRNA_LIGASE_II"/>
    <property type="match status" value="1"/>
</dbReference>
<keyword id="KW-0030">Aminoacyl-tRNA synthetase</keyword>
<keyword id="KW-0067">ATP-binding</keyword>
<keyword id="KW-0963">Cytoplasm</keyword>
<keyword id="KW-0436">Ligase</keyword>
<keyword id="KW-0547">Nucleotide-binding</keyword>
<keyword id="KW-0648">Protein biosynthesis</keyword>
<keyword id="KW-1185">Reference proteome</keyword>
<comment type="catalytic activity">
    <reaction evidence="1">
        <text>tRNA(Asn) + L-asparagine + ATP = L-asparaginyl-tRNA(Asn) + AMP + diphosphate + H(+)</text>
        <dbReference type="Rhea" id="RHEA:11180"/>
        <dbReference type="Rhea" id="RHEA-COMP:9659"/>
        <dbReference type="Rhea" id="RHEA-COMP:9674"/>
        <dbReference type="ChEBI" id="CHEBI:15378"/>
        <dbReference type="ChEBI" id="CHEBI:30616"/>
        <dbReference type="ChEBI" id="CHEBI:33019"/>
        <dbReference type="ChEBI" id="CHEBI:58048"/>
        <dbReference type="ChEBI" id="CHEBI:78442"/>
        <dbReference type="ChEBI" id="CHEBI:78515"/>
        <dbReference type="ChEBI" id="CHEBI:456215"/>
        <dbReference type="EC" id="6.1.1.22"/>
    </reaction>
</comment>
<comment type="subunit">
    <text evidence="1">Homodimer.</text>
</comment>
<comment type="subcellular location">
    <subcellularLocation>
        <location evidence="1">Cytoplasm</location>
    </subcellularLocation>
</comment>
<comment type="similarity">
    <text evidence="1">Belongs to the class-II aminoacyl-tRNA synthetase family.</text>
</comment>
<accession>A3CNM0</accession>
<proteinExistence type="inferred from homology"/>
<protein>
    <recommendedName>
        <fullName evidence="1">Asparagine--tRNA ligase</fullName>
        <ecNumber evidence="1">6.1.1.22</ecNumber>
    </recommendedName>
    <alternativeName>
        <fullName evidence="1">Asparaginyl-tRNA synthetase</fullName>
        <shortName evidence="1">AsnRS</shortName>
    </alternativeName>
</protein>
<gene>
    <name evidence="1" type="primary">asnS</name>
    <name type="ordered locus">SSA_1377</name>
</gene>